<protein>
    <recommendedName>
        <fullName>Endoglucanase C</fullName>
        <ecNumber>3.2.1.4</ecNumber>
    </recommendedName>
    <alternativeName>
        <fullName>Cellulase C</fullName>
    </alternativeName>
    <alternativeName>
        <fullName>Endo-1,4-beta-glucanase C</fullName>
    </alternativeName>
</protein>
<organism>
    <name type="scientific">Cellulomonas fimi (strain ATCC 484 / DSM 20113 / JCM 1341 / CCUG 24087 / LMG 16345 / NBRC 15513 / NCIMB 8980 / NCTC 7547 / NRS-133)</name>
    <dbReference type="NCBI Taxonomy" id="590998"/>
    <lineage>
        <taxon>Bacteria</taxon>
        <taxon>Bacillati</taxon>
        <taxon>Actinomycetota</taxon>
        <taxon>Actinomycetes</taxon>
        <taxon>Micrococcales</taxon>
        <taxon>Cellulomonadaceae</taxon>
        <taxon>Cellulomonas</taxon>
    </lineage>
</organism>
<feature type="signal peptide" evidence="5">
    <location>
        <begin position="1"/>
        <end position="32"/>
    </location>
</feature>
<feature type="chain" id="PRO_0000007946" description="Endoglucanase C">
    <location>
        <begin position="33"/>
        <end position="1101"/>
    </location>
</feature>
<feature type="domain" description="CBM-cenC 1">
    <location>
        <begin position="64"/>
        <end position="173"/>
    </location>
</feature>
<feature type="domain" description="CBM-cenC 2">
    <location>
        <begin position="212"/>
        <end position="318"/>
    </location>
</feature>
<feature type="domain" description="Ig-like 1">
    <location>
        <begin position="918"/>
        <end position="1006"/>
    </location>
</feature>
<feature type="domain" description="Ig-like 2">
    <location>
        <begin position="1008"/>
        <end position="1097"/>
    </location>
</feature>
<feature type="region of interest" description="Catalytic">
    <location>
        <begin position="329"/>
        <end position="880"/>
    </location>
</feature>
<feature type="region of interest" description="Disordered" evidence="4">
    <location>
        <begin position="838"/>
        <end position="865"/>
    </location>
</feature>
<feature type="active site" description="Nucleophile" evidence="3">
    <location>
        <position position="506"/>
    </location>
</feature>
<feature type="active site" evidence="1">
    <location>
        <position position="831"/>
    </location>
</feature>
<feature type="active site" evidence="2">
    <location>
        <position position="882"/>
    </location>
</feature>
<feature type="active site" evidence="2">
    <location>
        <position position="891"/>
    </location>
</feature>
<feature type="strand" evidence="9">
    <location>
        <begin position="42"/>
        <end position="44"/>
    </location>
</feature>
<feature type="strand" evidence="8">
    <location>
        <begin position="49"/>
        <end position="52"/>
    </location>
</feature>
<feature type="strand" evidence="8">
    <location>
        <begin position="62"/>
        <end position="68"/>
    </location>
</feature>
<feature type="strand" evidence="8">
    <location>
        <begin position="76"/>
        <end position="84"/>
    </location>
</feature>
<feature type="strand" evidence="8">
    <location>
        <begin position="91"/>
        <end position="102"/>
    </location>
</feature>
<feature type="strand" evidence="8">
    <location>
        <begin position="107"/>
        <end position="114"/>
    </location>
</feature>
<feature type="strand" evidence="8">
    <location>
        <begin position="119"/>
        <end position="123"/>
    </location>
</feature>
<feature type="strand" evidence="8">
    <location>
        <begin position="132"/>
        <end position="139"/>
    </location>
</feature>
<feature type="strand" evidence="8">
    <location>
        <begin position="155"/>
        <end position="160"/>
    </location>
</feature>
<feature type="strand" evidence="8">
    <location>
        <begin position="169"/>
        <end position="180"/>
    </location>
</feature>
<feature type="strand" evidence="7">
    <location>
        <begin position="184"/>
        <end position="186"/>
    </location>
</feature>
<feature type="turn" evidence="7">
    <location>
        <begin position="190"/>
        <end position="192"/>
    </location>
</feature>
<feature type="strand" evidence="7">
    <location>
        <begin position="198"/>
        <end position="203"/>
    </location>
</feature>
<feature type="strand" evidence="7">
    <location>
        <begin position="212"/>
        <end position="215"/>
    </location>
</feature>
<feature type="strand" evidence="7">
    <location>
        <begin position="226"/>
        <end position="230"/>
    </location>
</feature>
<feature type="strand" evidence="7">
    <location>
        <begin position="239"/>
        <end position="251"/>
    </location>
</feature>
<feature type="strand" evidence="7">
    <location>
        <begin position="253"/>
        <end position="260"/>
    </location>
</feature>
<feature type="strand" evidence="7">
    <location>
        <begin position="262"/>
        <end position="265"/>
    </location>
</feature>
<feature type="strand" evidence="7">
    <location>
        <begin position="272"/>
        <end position="277"/>
    </location>
</feature>
<feature type="strand" evidence="7">
    <location>
        <begin position="282"/>
        <end position="289"/>
    </location>
</feature>
<feature type="strand" evidence="7">
    <location>
        <begin position="296"/>
        <end position="299"/>
    </location>
</feature>
<feature type="strand" evidence="7">
    <location>
        <begin position="303"/>
        <end position="307"/>
    </location>
</feature>
<feature type="strand" evidence="7">
    <location>
        <begin position="315"/>
        <end position="324"/>
    </location>
</feature>
<keyword id="KW-0002">3D-structure</keyword>
<keyword id="KW-0119">Carbohydrate metabolism</keyword>
<keyword id="KW-0136">Cellulose degradation</keyword>
<keyword id="KW-0903">Direct protein sequencing</keyword>
<keyword id="KW-0326">Glycosidase</keyword>
<keyword id="KW-0378">Hydrolase</keyword>
<keyword id="KW-0393">Immunoglobulin domain</keyword>
<keyword id="KW-0624">Polysaccharide degradation</keyword>
<keyword id="KW-1185">Reference proteome</keyword>
<keyword id="KW-0677">Repeat</keyword>
<keyword id="KW-0732">Signal</keyword>
<name>GUNC_CELFA</name>
<dbReference type="EC" id="3.2.1.4"/>
<dbReference type="EMBL" id="X57858">
    <property type="protein sequence ID" value="CAA40993.1"/>
    <property type="molecule type" value="Genomic_DNA"/>
</dbReference>
<dbReference type="EMBL" id="CP002666">
    <property type="protein sequence ID" value="AEE45671.1"/>
    <property type="molecule type" value="Genomic_DNA"/>
</dbReference>
<dbReference type="EMBL" id="AH000874">
    <property type="protein sequence ID" value="AAA23087.1"/>
    <property type="status" value="ALT_TERM"/>
    <property type="molecule type" value="Genomic_DNA"/>
</dbReference>
<dbReference type="EMBL" id="AH000874">
    <property type="protein sequence ID" value="AAA23088.1"/>
    <property type="status" value="ALT_SEQ"/>
    <property type="molecule type" value="Genomic_DNA"/>
</dbReference>
<dbReference type="PIR" id="S15271">
    <property type="entry name" value="S15271"/>
</dbReference>
<dbReference type="RefSeq" id="WP_013770697.1">
    <property type="nucleotide sequence ID" value="NC_015514.1"/>
</dbReference>
<dbReference type="PDB" id="1CX1">
    <property type="method" value="NMR"/>
    <property type="chains" value="A=178-328"/>
</dbReference>
<dbReference type="PDB" id="1GU3">
    <property type="method" value="X-ray"/>
    <property type="resolution" value="2.30 A"/>
    <property type="chains" value="A=33-181"/>
</dbReference>
<dbReference type="PDB" id="1ULO">
    <property type="method" value="NMR"/>
    <property type="chains" value="A=33-184"/>
</dbReference>
<dbReference type="PDB" id="1ULP">
    <property type="method" value="NMR"/>
    <property type="chains" value="A=33-184"/>
</dbReference>
<dbReference type="PDBsum" id="1CX1"/>
<dbReference type="PDBsum" id="1GU3"/>
<dbReference type="PDBsum" id="1ULO"/>
<dbReference type="PDBsum" id="1ULP"/>
<dbReference type="SMR" id="P14090"/>
<dbReference type="STRING" id="590998.Celf_1537"/>
<dbReference type="DrugBank" id="DB02379">
    <property type="generic name" value="Beta-D-Glucose"/>
</dbReference>
<dbReference type="CAZy" id="CBM4">
    <property type="family name" value="Carbohydrate-Binding Module Family 4"/>
</dbReference>
<dbReference type="CAZy" id="GH9">
    <property type="family name" value="Glycoside Hydrolase Family 9"/>
</dbReference>
<dbReference type="KEGG" id="cfi:Celf_1537"/>
<dbReference type="eggNOG" id="COG3250">
    <property type="taxonomic scope" value="Bacteria"/>
</dbReference>
<dbReference type="eggNOG" id="COG5297">
    <property type="taxonomic scope" value="Bacteria"/>
</dbReference>
<dbReference type="HOGENOM" id="CLU_006010_0_0_11"/>
<dbReference type="EvolutionaryTrace" id="P14090"/>
<dbReference type="Proteomes" id="UP000008460">
    <property type="component" value="Chromosome"/>
</dbReference>
<dbReference type="GO" id="GO:0008810">
    <property type="term" value="F:cellulase activity"/>
    <property type="evidence" value="ECO:0007669"/>
    <property type="project" value="UniProtKB-EC"/>
</dbReference>
<dbReference type="GO" id="GO:0030245">
    <property type="term" value="P:cellulose catabolic process"/>
    <property type="evidence" value="ECO:0007669"/>
    <property type="project" value="UniProtKB-KW"/>
</dbReference>
<dbReference type="CDD" id="cd02850">
    <property type="entry name" value="E_set_Cellulase_N"/>
    <property type="match status" value="1"/>
</dbReference>
<dbReference type="Gene3D" id="1.50.10.10">
    <property type="match status" value="1"/>
</dbReference>
<dbReference type="Gene3D" id="2.60.120.260">
    <property type="entry name" value="Galactose-binding domain-like"/>
    <property type="match status" value="2"/>
</dbReference>
<dbReference type="Gene3D" id="2.60.40.10">
    <property type="entry name" value="Immunoglobulins"/>
    <property type="match status" value="3"/>
</dbReference>
<dbReference type="InterPro" id="IPR008928">
    <property type="entry name" value="6-hairpin_glycosidase_sf"/>
</dbReference>
<dbReference type="InterPro" id="IPR012341">
    <property type="entry name" value="6hp_glycosidase-like_sf"/>
</dbReference>
<dbReference type="InterPro" id="IPR004197">
    <property type="entry name" value="Cellulase_Ig-like"/>
</dbReference>
<dbReference type="InterPro" id="IPR003305">
    <property type="entry name" value="CenC_carb-bd"/>
</dbReference>
<dbReference type="InterPro" id="IPR008979">
    <property type="entry name" value="Galactose-bd-like_sf"/>
</dbReference>
<dbReference type="InterPro" id="IPR001701">
    <property type="entry name" value="Glyco_hydro_9"/>
</dbReference>
<dbReference type="InterPro" id="IPR033126">
    <property type="entry name" value="Glyco_hydro_9_Asp/Glu_AS"/>
</dbReference>
<dbReference type="InterPro" id="IPR018221">
    <property type="entry name" value="Glyco_hydro_9_His_AS"/>
</dbReference>
<dbReference type="InterPro" id="IPR007110">
    <property type="entry name" value="Ig-like_dom"/>
</dbReference>
<dbReference type="InterPro" id="IPR036179">
    <property type="entry name" value="Ig-like_dom_sf"/>
</dbReference>
<dbReference type="InterPro" id="IPR013783">
    <property type="entry name" value="Ig-like_fold"/>
</dbReference>
<dbReference type="InterPro" id="IPR014756">
    <property type="entry name" value="Ig_E-set"/>
</dbReference>
<dbReference type="InterPro" id="IPR013098">
    <property type="entry name" value="Ig_I-set"/>
</dbReference>
<dbReference type="InterPro" id="IPR003599">
    <property type="entry name" value="Ig_sub"/>
</dbReference>
<dbReference type="PANTHER" id="PTHR22298">
    <property type="entry name" value="ENDO-1,4-BETA-GLUCANASE"/>
    <property type="match status" value="1"/>
</dbReference>
<dbReference type="Pfam" id="PF02018">
    <property type="entry name" value="CBM_4_9"/>
    <property type="match status" value="1"/>
</dbReference>
<dbReference type="Pfam" id="PF02927">
    <property type="entry name" value="CelD_N"/>
    <property type="match status" value="1"/>
</dbReference>
<dbReference type="Pfam" id="PF00759">
    <property type="entry name" value="Glyco_hydro_9"/>
    <property type="match status" value="1"/>
</dbReference>
<dbReference type="Pfam" id="PF07679">
    <property type="entry name" value="I-set"/>
    <property type="match status" value="1"/>
</dbReference>
<dbReference type="SMART" id="SM00409">
    <property type="entry name" value="IG"/>
    <property type="match status" value="2"/>
</dbReference>
<dbReference type="SUPFAM" id="SSF81296">
    <property type="entry name" value="E set domains"/>
    <property type="match status" value="1"/>
</dbReference>
<dbReference type="SUPFAM" id="SSF49785">
    <property type="entry name" value="Galactose-binding domain-like"/>
    <property type="match status" value="2"/>
</dbReference>
<dbReference type="SUPFAM" id="SSF48726">
    <property type="entry name" value="Immunoglobulin"/>
    <property type="match status" value="2"/>
</dbReference>
<dbReference type="SUPFAM" id="SSF48208">
    <property type="entry name" value="Six-hairpin glycosidases"/>
    <property type="match status" value="1"/>
</dbReference>
<dbReference type="PROSITE" id="PS60032">
    <property type="entry name" value="GH9_1"/>
    <property type="match status" value="1"/>
</dbReference>
<dbReference type="PROSITE" id="PS00592">
    <property type="entry name" value="GH9_2"/>
    <property type="match status" value="1"/>
</dbReference>
<dbReference type="PROSITE" id="PS00698">
    <property type="entry name" value="GH9_3"/>
    <property type="match status" value="1"/>
</dbReference>
<dbReference type="PROSITE" id="PS50835">
    <property type="entry name" value="IG_LIKE"/>
    <property type="match status" value="1"/>
</dbReference>
<comment type="function">
    <text>The biological conversion of cellulose to glucose generally requires three types of hydrolytic enzymes: (1) Endoglucanases which cut internal beta-1,4-glucosidic bonds; (2) Exocellobiohydrolases that cut the disaccharide cellobiose from the non-reducing end of the cellulose polymer chain; (3) Beta-1,4-glucosidases which hydrolyze the cellobiose and other short cello-oligosaccharides to glucose.</text>
</comment>
<comment type="catalytic activity">
    <reaction>
        <text>Endohydrolysis of (1-&gt;4)-beta-D-glucosidic linkages in cellulose, lichenin and cereal beta-D-glucans.</text>
        <dbReference type="EC" id="3.2.1.4"/>
    </reaction>
</comment>
<comment type="similarity">
    <text evidence="3 6">Belongs to the glycosyl hydrolase 9 (cellulase E) family.</text>
</comment>
<accession>P14090</accession>
<accession>F4H737</accession>
<sequence length="1101" mass="115216">MVSRRSSQARGALTAVVATLALALAGSGTALAASPIGEGTFDDGPEGWVAYGTDGPLDTSTGALCVAVPAGSAQYGVGVVLNGVAIEEGTTYTLRYTATASTDVTVRALVGQNGAPYGTVLDTSPALTSEPRQVTETFTASATYPATPAADDPEGQIAFQLGGFSADAWTFCLDDVALDSEVELLPHTSFAESLGPWSLYGTSEPVFADGRMCVDLPGGQGNPWDAGLVYNGVPVGEGESYVLSFTASATPDMPVRVLVGEGGGAYRTAFEQGSAPLTGEPATREYAFTSNLTFPPDGDAPGQVAFHLGKAGAYEFCISQVSLTTSATPPPGYEPDTGPRVRVNQVGYLPFGPKRATLVTDAAEPVAWELRDADGVVVADGTSEPRGVEPSAAQAVHVLDFSDVTTQGAGYTLVADGETSRPFDIDGDLYQQLRYDALNYFYLARSGTEIEADVVGEEYAREAGHVGVAPNQGDTDVPCIGPRDYYDGWTCDYRLDVSGGWYDAGDHGKYVVNGGIAVGQLLQTYERALHAGTADALADGTLDVPEHGNDVPDVLDEARWELEWMLSMIVPEGEYAGMVHHKVHDEGWTGLPLLPADDPQARSLHRPSTAATLNLSAVAAQGARLLEPYDPQLAQTLLEAARTTWAAAQEHPALYAPGEAGADGGGAYNDSQVADEFYWAAAELYLTTGEDAFATAVTTSPLHTADVFTADGFGWGSVAALGRLDLATVPNELPGLDAVQSSVVEGAQEYLAAQAGQGFGSLYSPPGGEYVWGSSSQVANNLVVVATAYDLTGDERFRAATLEGLDYLFGRNALNQSYVTGWGEVASHQQHSRWFAHQLDPSLPSPPPGSLAGGPNSQAATWDPTTKAAFPDGCAPSACYVDEIQAWSTNELTVNWNSALSWVASWVADQGSAEPVPTAPVVTRQPVDATVALGADATFTAEASGVPAPTVRWQVRAGRGWKDVAGATGTTLTVRATARTDGTRYRAVFTNAAGSVESAVVRLTVERAAPVVTQHPADVRARVGTRAVFRAAADGYPTPCVVWQVRWGGGSWRPIPWATSTTLSVPVTVLAAGTEYRAVFTNAVGTAATEPAELAVQRPRS</sequence>
<gene>
    <name type="primary">cenC</name>
    <name type="ordered locus">Celf_1537</name>
</gene>
<reference key="1">
    <citation type="journal article" date="1991" name="Mol. Microbiol.">
        <title>Nucleotide sequence of the endoglucanase C gene (cenC) of Cellulomonas fimi, its high-level expression in Escherichia coli, and characterization of its products.</title>
        <authorList>
            <person name="Coutinho J.B."/>
            <person name="Moser B."/>
            <person name="Kilburn D.G."/>
            <person name="Warren R.A.J."/>
            <person name="Miller R.C. Jr."/>
        </authorList>
    </citation>
    <scope>NUCLEOTIDE SEQUENCE [GENOMIC DNA]</scope>
    <scope>PROTEIN SEQUENCE OF 33-42</scope>
    <source>
        <strain>ATCC 484 / DSM 20113 / JCM 1341 / CCUG 24087 / LMG 16345 / NBRC 15513 / NCIMB 8980 / NCTC 7547 / NRS-133</strain>
    </source>
</reference>
<reference key="2">
    <citation type="submission" date="2011-04" db="EMBL/GenBank/DDBJ databases">
        <title>Complete sequence of Cellulomonas fimi ATCC 484.</title>
        <authorList>
            <consortium name="US DOE Joint Genome Institute"/>
            <person name="Lucas S."/>
            <person name="Han J."/>
            <person name="Lapidus A."/>
            <person name="Cheng J.-F."/>
            <person name="Goodwin L."/>
            <person name="Pitluck S."/>
            <person name="Peters L."/>
            <person name="Chertkov O."/>
            <person name="Detter J.C."/>
            <person name="Han C."/>
            <person name="Tapia R."/>
            <person name="Land M."/>
            <person name="Hauser L."/>
            <person name="Kyrpides N."/>
            <person name="Ivanova N."/>
            <person name="Ovchinnikova G."/>
            <person name="Pagani I."/>
            <person name="Mead D."/>
            <person name="Brumm P."/>
            <person name="Woyke T."/>
        </authorList>
    </citation>
    <scope>NUCLEOTIDE SEQUENCE [LARGE SCALE GENOMIC DNA]</scope>
    <source>
        <strain>ATCC 484 / DSM 20113 / JCM 1341 / CCUG 24087 / LMG 16345 / NBRC 15513 / NCIMB 8980 / NCTC 7547 / NRS-133</strain>
    </source>
</reference>
<reference key="3">
    <citation type="journal article" date="1989" name="Appl. Environ. Microbiol.">
        <title>Purification and characterization of endoglucanase C of Cellulomonas fimi, cloning of the gene, and analysis of in vivo transcripts of the gene.</title>
        <authorList>
            <person name="Moser B."/>
            <person name="Gilkes N.R."/>
            <person name="Kilburn D.G."/>
            <person name="Warren R.A.J."/>
            <person name="Miller R.C. Jr."/>
        </authorList>
    </citation>
    <scope>NUCLEOTIDE SEQUENCE [GENOMIC DNA] OF 1-64</scope>
    <scope>PROTEIN SEQUENCE OF 625-641</scope>
    <source>
        <strain>ATCC 484 / DSM 20113 / JCM 1341 / CCUG 24087 / LMG 16345 / NBRC 15513 / NCIMB 8980 / NCTC 7547 / NRS-133</strain>
    </source>
</reference>
<reference key="4">
    <citation type="journal article" date="1992" name="Mol. Microbiol.">
        <title>The binding of Cellulomonas fimi endoglucanase C (CenC) to cellulose and Sephadex is mediated by the N-terminal repeats.</title>
        <authorList>
            <person name="Coutinho J.B."/>
            <person name="Gilkes N.R."/>
            <person name="Warren R.A.J."/>
            <person name="Kilburn D.G."/>
            <person name="Miller R.C. Jr."/>
        </authorList>
    </citation>
    <scope>DOMAINS CELLULOSE BINDING</scope>
</reference>
<reference key="5">
    <citation type="journal article" date="1996" name="Protein Sci.">
        <title>Members of the immunoglobulin superfamily in bacteria.</title>
        <authorList>
            <person name="Bateman A."/>
            <person name="Eddy S.R."/>
            <person name="Chothia C."/>
        </authorList>
    </citation>
    <scope>DOMAINS IG-LIKE</scope>
</reference>
<reference key="6">
    <citation type="journal article" date="1996" name="Biochemistry">
        <title>Structure of the N-terminal cellulose-binding domain of Cellulomonas fimi CenC determined by nuclear magnetic resonance spectroscopy.</title>
        <authorList>
            <person name="Johnson P.E."/>
            <person name="Joshi M.D."/>
            <person name="Tomme P."/>
            <person name="Kilburn D.G."/>
            <person name="McIntosh L.P."/>
        </authorList>
    </citation>
    <scope>STRUCTURE BY NMR OF 33-184</scope>
</reference>
<proteinExistence type="evidence at protein level"/>
<evidence type="ECO:0000255" key="1">
    <source>
        <dbReference type="PROSITE-ProRule" id="PRU10059"/>
    </source>
</evidence>
<evidence type="ECO:0000255" key="2">
    <source>
        <dbReference type="PROSITE-ProRule" id="PRU10060"/>
    </source>
</evidence>
<evidence type="ECO:0000255" key="3">
    <source>
        <dbReference type="PROSITE-ProRule" id="PRU10140"/>
    </source>
</evidence>
<evidence type="ECO:0000256" key="4">
    <source>
        <dbReference type="SAM" id="MobiDB-lite"/>
    </source>
</evidence>
<evidence type="ECO:0000269" key="5">
    <source>
    </source>
</evidence>
<evidence type="ECO:0000305" key="6"/>
<evidence type="ECO:0007829" key="7">
    <source>
        <dbReference type="PDB" id="1CX1"/>
    </source>
</evidence>
<evidence type="ECO:0007829" key="8">
    <source>
        <dbReference type="PDB" id="1GU3"/>
    </source>
</evidence>
<evidence type="ECO:0007829" key="9">
    <source>
        <dbReference type="PDB" id="1ULP"/>
    </source>
</evidence>